<gene>
    <name type="primary">pkp1</name>
    <name type="ORF">SPAC644.11c</name>
</gene>
<feature type="transit peptide" description="Mitochondrion" evidence="2 3">
    <location>
        <begin position="1"/>
        <end status="unknown"/>
    </location>
</feature>
<feature type="chain" id="PRO_0000259609" description="[Pyruvate dehydrogenase (acetyl-transferring)] kinase, mitochondrial">
    <location>
        <begin status="unknown"/>
        <end position="425"/>
    </location>
</feature>
<feature type="domain" description="Histidine kinase" evidence="4">
    <location>
        <begin position="180"/>
        <end position="418"/>
    </location>
</feature>
<feature type="binding site" evidence="1">
    <location>
        <begin position="296"/>
        <end position="303"/>
    </location>
    <ligand>
        <name>ATP</name>
        <dbReference type="ChEBI" id="CHEBI:30616"/>
    </ligand>
</feature>
<feature type="binding site" evidence="1">
    <location>
        <position position="336"/>
    </location>
    <ligand>
        <name>ATP</name>
        <dbReference type="ChEBI" id="CHEBI:30616"/>
    </ligand>
</feature>
<feature type="binding site" evidence="1">
    <location>
        <begin position="355"/>
        <end position="356"/>
    </location>
    <ligand>
        <name>ATP</name>
        <dbReference type="ChEBI" id="CHEBI:30616"/>
    </ligand>
</feature>
<feature type="binding site" evidence="1">
    <location>
        <begin position="379"/>
        <end position="384"/>
    </location>
    <ligand>
        <name>ATP</name>
        <dbReference type="ChEBI" id="CHEBI:30616"/>
    </ligand>
</feature>
<feature type="modified residue" description="Phosphohistidine; by autocatalysis" evidence="4">
    <location>
        <position position="178"/>
    </location>
</feature>
<accession>Q9P6P9</accession>
<dbReference type="EC" id="2.7.11.2"/>
<dbReference type="EMBL" id="CU329670">
    <property type="protein sequence ID" value="CAB90138.1"/>
    <property type="molecule type" value="Genomic_DNA"/>
</dbReference>
<dbReference type="RefSeq" id="NP_593879.1">
    <property type="nucleotide sequence ID" value="NM_001019309.2"/>
</dbReference>
<dbReference type="SMR" id="Q9P6P9"/>
<dbReference type="BioGRID" id="280065">
    <property type="interactions" value="17"/>
</dbReference>
<dbReference type="FunCoup" id="Q9P6P9">
    <property type="interactions" value="549"/>
</dbReference>
<dbReference type="STRING" id="284812.Q9P6P9"/>
<dbReference type="PaxDb" id="4896-SPAC644.11c.1"/>
<dbReference type="EnsemblFungi" id="SPAC644.11c.1">
    <property type="protein sequence ID" value="SPAC644.11c.1:pep"/>
    <property type="gene ID" value="SPAC644.11c"/>
</dbReference>
<dbReference type="GeneID" id="2543651"/>
<dbReference type="KEGG" id="spo:2543651"/>
<dbReference type="PomBase" id="SPAC644.11c">
    <property type="gene designation" value="pkp1"/>
</dbReference>
<dbReference type="VEuPathDB" id="FungiDB:SPAC644.11c"/>
<dbReference type="eggNOG" id="KOG0787">
    <property type="taxonomic scope" value="Eukaryota"/>
</dbReference>
<dbReference type="HOGENOM" id="CLU_023861_5_1_1"/>
<dbReference type="InParanoid" id="Q9P6P9"/>
<dbReference type="OMA" id="NEMPSIC"/>
<dbReference type="PhylomeDB" id="Q9P6P9"/>
<dbReference type="Reactome" id="R-SPO-204174">
    <property type="pathway name" value="Regulation of pyruvate dehydrogenase (PDH) complex"/>
</dbReference>
<dbReference type="Reactome" id="R-SPO-5362517">
    <property type="pathway name" value="Signaling by Retinoic Acid"/>
</dbReference>
<dbReference type="Reactome" id="R-SPO-9837999">
    <property type="pathway name" value="Mitochondrial protein degradation"/>
</dbReference>
<dbReference type="PRO" id="PR:Q9P6P9"/>
<dbReference type="Proteomes" id="UP000002485">
    <property type="component" value="Chromosome I"/>
</dbReference>
<dbReference type="GO" id="GO:0005759">
    <property type="term" value="C:mitochondrial matrix"/>
    <property type="evidence" value="ECO:0007669"/>
    <property type="project" value="UniProtKB-SubCell"/>
</dbReference>
<dbReference type="GO" id="GO:0005739">
    <property type="term" value="C:mitochondrion"/>
    <property type="evidence" value="ECO:0007005"/>
    <property type="project" value="PomBase"/>
</dbReference>
<dbReference type="GO" id="GO:0005524">
    <property type="term" value="F:ATP binding"/>
    <property type="evidence" value="ECO:0000255"/>
    <property type="project" value="PomBase"/>
</dbReference>
<dbReference type="GO" id="GO:0016887">
    <property type="term" value="F:ATP hydrolysis activity"/>
    <property type="evidence" value="ECO:0000250"/>
    <property type="project" value="PomBase"/>
</dbReference>
<dbReference type="GO" id="GO:0004740">
    <property type="term" value="F:pyruvate dehydrogenase (acetyl-transferring) kinase activity"/>
    <property type="evidence" value="ECO:0000318"/>
    <property type="project" value="GO_Central"/>
</dbReference>
<dbReference type="GO" id="GO:0009060">
    <property type="term" value="P:aerobic respiration"/>
    <property type="evidence" value="ECO:0000305"/>
    <property type="project" value="PomBase"/>
</dbReference>
<dbReference type="GO" id="GO:0010510">
    <property type="term" value="P:regulation of acetyl-CoA biosynthetic process from pyruvate"/>
    <property type="evidence" value="ECO:0000318"/>
    <property type="project" value="GO_Central"/>
</dbReference>
<dbReference type="GO" id="GO:0010906">
    <property type="term" value="P:regulation of glucose metabolic process"/>
    <property type="evidence" value="ECO:0000318"/>
    <property type="project" value="GO_Central"/>
</dbReference>
<dbReference type="CDD" id="cd16929">
    <property type="entry name" value="HATPase_PDK-like"/>
    <property type="match status" value="1"/>
</dbReference>
<dbReference type="Gene3D" id="1.20.140.20">
    <property type="entry name" value="Alpha-ketoacid/pyruvate dehydrogenase kinase, N-terminal domain"/>
    <property type="match status" value="1"/>
</dbReference>
<dbReference type="Gene3D" id="3.30.565.10">
    <property type="entry name" value="Histidine kinase-like ATPase, C-terminal domain"/>
    <property type="match status" value="1"/>
</dbReference>
<dbReference type="InterPro" id="IPR036784">
    <property type="entry name" value="AK/P_DHK_N_sf"/>
</dbReference>
<dbReference type="InterPro" id="IPR018955">
    <property type="entry name" value="BCDHK/PDK_N"/>
</dbReference>
<dbReference type="InterPro" id="IPR039028">
    <property type="entry name" value="BCKD/PDK"/>
</dbReference>
<dbReference type="InterPro" id="IPR036890">
    <property type="entry name" value="HATPase_C_sf"/>
</dbReference>
<dbReference type="InterPro" id="IPR005467">
    <property type="entry name" value="His_kinase_dom"/>
</dbReference>
<dbReference type="InterPro" id="IPR004358">
    <property type="entry name" value="Sig_transdc_His_kin-like_C"/>
</dbReference>
<dbReference type="PANTHER" id="PTHR11947:SF3">
    <property type="entry name" value="[PYRUVATE DEHYDROGENASE (ACETYL-TRANSFERRING)] KINASE, MITOCHONDRIAL"/>
    <property type="match status" value="1"/>
</dbReference>
<dbReference type="PANTHER" id="PTHR11947">
    <property type="entry name" value="PYRUVATE DEHYDROGENASE KINASE"/>
    <property type="match status" value="1"/>
</dbReference>
<dbReference type="Pfam" id="PF10436">
    <property type="entry name" value="BCDHK_Adom3"/>
    <property type="match status" value="1"/>
</dbReference>
<dbReference type="Pfam" id="PF02518">
    <property type="entry name" value="HATPase_c"/>
    <property type="match status" value="1"/>
</dbReference>
<dbReference type="PRINTS" id="PR00344">
    <property type="entry name" value="BCTRLSENSOR"/>
</dbReference>
<dbReference type="SMART" id="SM00387">
    <property type="entry name" value="HATPase_c"/>
    <property type="match status" value="1"/>
</dbReference>
<dbReference type="SUPFAM" id="SSF69012">
    <property type="entry name" value="alpha-ketoacid dehydrogenase kinase, N-terminal domain"/>
    <property type="match status" value="1"/>
</dbReference>
<dbReference type="SUPFAM" id="SSF55874">
    <property type="entry name" value="ATPase domain of HSP90 chaperone/DNA topoisomerase II/histidine kinase"/>
    <property type="match status" value="1"/>
</dbReference>
<dbReference type="PROSITE" id="PS50109">
    <property type="entry name" value="HIS_KIN"/>
    <property type="match status" value="1"/>
</dbReference>
<name>PDK_SCHPO</name>
<comment type="function">
    <text evidence="2">Inhibits the mitochondrial pyruvate dehydrogenase complex by phosphorylation of the E1 alpha subunit, thus contributing to the regulation of glucose metabolism.</text>
</comment>
<comment type="catalytic activity">
    <reaction evidence="2">
        <text>L-seryl-[pyruvate dehydrogenase E1 alpha subunit] + ATP = O-phospho-L-seryl-[pyruvate dehydrogenase E1 alpha subunit] + ADP + H(+)</text>
        <dbReference type="Rhea" id="RHEA:23052"/>
        <dbReference type="Rhea" id="RHEA-COMP:13689"/>
        <dbReference type="Rhea" id="RHEA-COMP:13690"/>
        <dbReference type="ChEBI" id="CHEBI:15378"/>
        <dbReference type="ChEBI" id="CHEBI:29999"/>
        <dbReference type="ChEBI" id="CHEBI:30616"/>
        <dbReference type="ChEBI" id="CHEBI:83421"/>
        <dbReference type="ChEBI" id="CHEBI:456216"/>
        <dbReference type="EC" id="2.7.11.2"/>
    </reaction>
</comment>
<comment type="subcellular location">
    <subcellularLocation>
        <location evidence="5">Mitochondrion matrix</location>
    </subcellularLocation>
</comment>
<comment type="similarity">
    <text evidence="3">Belongs to the PDK/BCKDK protein kinase family.</text>
</comment>
<keyword id="KW-0067">ATP-binding</keyword>
<keyword id="KW-0418">Kinase</keyword>
<keyword id="KW-0496">Mitochondrion</keyword>
<keyword id="KW-0547">Nucleotide-binding</keyword>
<keyword id="KW-0597">Phosphoprotein</keyword>
<keyword id="KW-1185">Reference proteome</keyword>
<keyword id="KW-0808">Transferase</keyword>
<keyword id="KW-0809">Transit peptide</keyword>
<sequence length="425" mass="48187">MSVLGKTLQEKVNLLAQYPQTGLSLKQLVYFGKNPTPGTLFRAGLFLRDELPIRLARRIQDLQNLSPMLRSMKRISSVKAAYGRSMEEIIELKGVELPKCLPKHARYHNAPKWRSSLMDSEILHNPSLANTHLDSSKGRYFETDFSDQDNGVDCNWPESLLKFNSNFAYLLNTIRTRHDNVAVEIALDIQEYRRKTNQIDNSIQIFLDRFYMSRIGIRMLLGQYIALVSEPPRENYVGVISTRANIYQIIEGAAENAKYICRLAYGLFEAPEIQIICDPSLEMMYVESHLNHAVFEILKNSLRATVEFHGVDSDFFPPIKVIVAKGQEDITIKISDEGGGISRRNIPLVWSYMFTTASPTLTDDPHDIVSANSTTPMAGFGFGLPLARLYTRYFGGDLELISMEGYGTDVYIHLNRLCESAEPLQ</sequence>
<evidence type="ECO:0000250" key="1"/>
<evidence type="ECO:0000250" key="2">
    <source>
        <dbReference type="UniProtKB" id="P40530"/>
    </source>
</evidence>
<evidence type="ECO:0000255" key="3"/>
<evidence type="ECO:0000255" key="4">
    <source>
        <dbReference type="PROSITE-ProRule" id="PRU00107"/>
    </source>
</evidence>
<evidence type="ECO:0000269" key="5">
    <source>
    </source>
</evidence>
<evidence type="ECO:0000305" key="6"/>
<evidence type="ECO:0000312" key="7">
    <source>
        <dbReference type="EMBL" id="CAB90138.1"/>
    </source>
</evidence>
<protein>
    <recommendedName>
        <fullName>[Pyruvate dehydrogenase (acetyl-transferring)] kinase, mitochondrial</fullName>
        <shortName>Pyruvate dehydrogenase kinase</shortName>
        <ecNumber>2.7.11.2</ecNumber>
    </recommendedName>
</protein>
<organism>
    <name type="scientific">Schizosaccharomyces pombe (strain 972 / ATCC 24843)</name>
    <name type="common">Fission yeast</name>
    <dbReference type="NCBI Taxonomy" id="284812"/>
    <lineage>
        <taxon>Eukaryota</taxon>
        <taxon>Fungi</taxon>
        <taxon>Dikarya</taxon>
        <taxon>Ascomycota</taxon>
        <taxon>Taphrinomycotina</taxon>
        <taxon>Schizosaccharomycetes</taxon>
        <taxon>Schizosaccharomycetales</taxon>
        <taxon>Schizosaccharomycetaceae</taxon>
        <taxon>Schizosaccharomyces</taxon>
    </lineage>
</organism>
<proteinExistence type="inferred from homology"/>
<reference evidence="7" key="1">
    <citation type="journal article" date="2002" name="Nature">
        <title>The genome sequence of Schizosaccharomyces pombe.</title>
        <authorList>
            <person name="Wood V."/>
            <person name="Gwilliam R."/>
            <person name="Rajandream M.A."/>
            <person name="Lyne M.H."/>
            <person name="Lyne R."/>
            <person name="Stewart A."/>
            <person name="Sgouros J.G."/>
            <person name="Peat N."/>
            <person name="Hayles J."/>
            <person name="Baker S.G."/>
            <person name="Basham D."/>
            <person name="Bowman S."/>
            <person name="Brooks K."/>
            <person name="Brown D."/>
            <person name="Brown S."/>
            <person name="Chillingworth T."/>
            <person name="Churcher C.M."/>
            <person name="Collins M."/>
            <person name="Connor R."/>
            <person name="Cronin A."/>
            <person name="Davis P."/>
            <person name="Feltwell T."/>
            <person name="Fraser A."/>
            <person name="Gentles S."/>
            <person name="Goble A."/>
            <person name="Hamlin N."/>
            <person name="Harris D.E."/>
            <person name="Hidalgo J."/>
            <person name="Hodgson G."/>
            <person name="Holroyd S."/>
            <person name="Hornsby T."/>
            <person name="Howarth S."/>
            <person name="Huckle E.J."/>
            <person name="Hunt S."/>
            <person name="Jagels K."/>
            <person name="James K.D."/>
            <person name="Jones L."/>
            <person name="Jones M."/>
            <person name="Leather S."/>
            <person name="McDonald S."/>
            <person name="McLean J."/>
            <person name="Mooney P."/>
            <person name="Moule S."/>
            <person name="Mungall K.L."/>
            <person name="Murphy L.D."/>
            <person name="Niblett D."/>
            <person name="Odell C."/>
            <person name="Oliver K."/>
            <person name="O'Neil S."/>
            <person name="Pearson D."/>
            <person name="Quail M.A."/>
            <person name="Rabbinowitsch E."/>
            <person name="Rutherford K.M."/>
            <person name="Rutter S."/>
            <person name="Saunders D."/>
            <person name="Seeger K."/>
            <person name="Sharp S."/>
            <person name="Skelton J."/>
            <person name="Simmonds M.N."/>
            <person name="Squares R."/>
            <person name="Squares S."/>
            <person name="Stevens K."/>
            <person name="Taylor K."/>
            <person name="Taylor R.G."/>
            <person name="Tivey A."/>
            <person name="Walsh S.V."/>
            <person name="Warren T."/>
            <person name="Whitehead S."/>
            <person name="Woodward J.R."/>
            <person name="Volckaert G."/>
            <person name="Aert R."/>
            <person name="Robben J."/>
            <person name="Grymonprez B."/>
            <person name="Weltjens I."/>
            <person name="Vanstreels E."/>
            <person name="Rieger M."/>
            <person name="Schaefer M."/>
            <person name="Mueller-Auer S."/>
            <person name="Gabel C."/>
            <person name="Fuchs M."/>
            <person name="Duesterhoeft A."/>
            <person name="Fritzc C."/>
            <person name="Holzer E."/>
            <person name="Moestl D."/>
            <person name="Hilbert H."/>
            <person name="Borzym K."/>
            <person name="Langer I."/>
            <person name="Beck A."/>
            <person name="Lehrach H."/>
            <person name="Reinhardt R."/>
            <person name="Pohl T.M."/>
            <person name="Eger P."/>
            <person name="Zimmermann W."/>
            <person name="Wedler H."/>
            <person name="Wambutt R."/>
            <person name="Purnelle B."/>
            <person name="Goffeau A."/>
            <person name="Cadieu E."/>
            <person name="Dreano S."/>
            <person name="Gloux S."/>
            <person name="Lelaure V."/>
            <person name="Mottier S."/>
            <person name="Galibert F."/>
            <person name="Aves S.J."/>
            <person name="Xiang Z."/>
            <person name="Hunt C."/>
            <person name="Moore K."/>
            <person name="Hurst S.M."/>
            <person name="Lucas M."/>
            <person name="Rochet M."/>
            <person name="Gaillardin C."/>
            <person name="Tallada V.A."/>
            <person name="Garzon A."/>
            <person name="Thode G."/>
            <person name="Daga R.R."/>
            <person name="Cruzado L."/>
            <person name="Jimenez J."/>
            <person name="Sanchez M."/>
            <person name="del Rey F."/>
            <person name="Benito J."/>
            <person name="Dominguez A."/>
            <person name="Revuelta J.L."/>
            <person name="Moreno S."/>
            <person name="Armstrong J."/>
            <person name="Forsburg S.L."/>
            <person name="Cerutti L."/>
            <person name="Lowe T."/>
            <person name="McCombie W.R."/>
            <person name="Paulsen I."/>
            <person name="Potashkin J."/>
            <person name="Shpakovski G.V."/>
            <person name="Ussery D."/>
            <person name="Barrell B.G."/>
            <person name="Nurse P."/>
        </authorList>
    </citation>
    <scope>NUCLEOTIDE SEQUENCE [LARGE SCALE GENOMIC DNA]</scope>
    <source>
        <strain>972 / ATCC 24843</strain>
    </source>
</reference>
<reference evidence="6" key="2">
    <citation type="journal article" date="2006" name="Nat. Biotechnol.">
        <title>ORFeome cloning and global analysis of protein localization in the fission yeast Schizosaccharomyces pombe.</title>
        <authorList>
            <person name="Matsuyama A."/>
            <person name="Arai R."/>
            <person name="Yashiroda Y."/>
            <person name="Shirai A."/>
            <person name="Kamata A."/>
            <person name="Sekido S."/>
            <person name="Kobayashi Y."/>
            <person name="Hashimoto A."/>
            <person name="Hamamoto M."/>
            <person name="Hiraoka Y."/>
            <person name="Horinouchi S."/>
            <person name="Yoshida M."/>
        </authorList>
    </citation>
    <scope>SUBCELLULAR LOCATION [LARGE SCALE ANALYSIS]</scope>
</reference>